<evidence type="ECO:0000255" key="1">
    <source>
        <dbReference type="HAMAP-Rule" id="MF_00249"/>
    </source>
</evidence>
<proteinExistence type="inferred from homology"/>
<protein>
    <recommendedName>
        <fullName evidence="1">ATP-dependent protease ATPase subunit HslU</fullName>
    </recommendedName>
    <alternativeName>
        <fullName evidence="1">Heat shock protein HslU</fullName>
    </alternativeName>
    <alternativeName>
        <fullName evidence="1">Unfoldase HslU</fullName>
    </alternativeName>
</protein>
<comment type="function">
    <text evidence="1">ATPase subunit of a proteasome-like degradation complex; this subunit has chaperone activity. The binding of ATP and its subsequent hydrolysis by HslU are essential for unfolding of protein substrates subsequently hydrolyzed by HslV. HslU recognizes the N-terminal part of its protein substrates and unfolds these before they are guided to HslV for hydrolysis.</text>
</comment>
<comment type="subunit">
    <text evidence="1">A double ring-shaped homohexamer of HslV is capped on each side by a ring-shaped HslU homohexamer. The assembly of the HslU/HslV complex is dependent on binding of ATP.</text>
</comment>
<comment type="subcellular location">
    <subcellularLocation>
        <location evidence="1">Cytoplasm</location>
    </subcellularLocation>
</comment>
<comment type="induction">
    <text evidence="1">By heat shock.</text>
</comment>
<comment type="similarity">
    <text evidence="1">Belongs to the ClpX chaperone family. HslU subfamily.</text>
</comment>
<name>HSLU_SALEP</name>
<feature type="chain" id="PRO_1000100970" description="ATP-dependent protease ATPase subunit HslU">
    <location>
        <begin position="1"/>
        <end position="443"/>
    </location>
</feature>
<feature type="binding site" evidence="1">
    <location>
        <position position="18"/>
    </location>
    <ligand>
        <name>ATP</name>
        <dbReference type="ChEBI" id="CHEBI:30616"/>
    </ligand>
</feature>
<feature type="binding site" evidence="1">
    <location>
        <begin position="60"/>
        <end position="65"/>
    </location>
    <ligand>
        <name>ATP</name>
        <dbReference type="ChEBI" id="CHEBI:30616"/>
    </ligand>
</feature>
<feature type="binding site" evidence="1">
    <location>
        <position position="256"/>
    </location>
    <ligand>
        <name>ATP</name>
        <dbReference type="ChEBI" id="CHEBI:30616"/>
    </ligand>
</feature>
<feature type="binding site" evidence="1">
    <location>
        <position position="321"/>
    </location>
    <ligand>
        <name>ATP</name>
        <dbReference type="ChEBI" id="CHEBI:30616"/>
    </ligand>
</feature>
<feature type="binding site" evidence="1">
    <location>
        <position position="393"/>
    </location>
    <ligand>
        <name>ATP</name>
        <dbReference type="ChEBI" id="CHEBI:30616"/>
    </ligand>
</feature>
<organism>
    <name type="scientific">Salmonella enteritidis PT4 (strain P125109)</name>
    <dbReference type="NCBI Taxonomy" id="550537"/>
    <lineage>
        <taxon>Bacteria</taxon>
        <taxon>Pseudomonadati</taxon>
        <taxon>Pseudomonadota</taxon>
        <taxon>Gammaproteobacteria</taxon>
        <taxon>Enterobacterales</taxon>
        <taxon>Enterobacteriaceae</taxon>
        <taxon>Salmonella</taxon>
    </lineage>
</organism>
<gene>
    <name evidence="1" type="primary">hslU</name>
    <name type="ordered locus">SEN3881</name>
</gene>
<keyword id="KW-0067">ATP-binding</keyword>
<keyword id="KW-0143">Chaperone</keyword>
<keyword id="KW-0963">Cytoplasm</keyword>
<keyword id="KW-0547">Nucleotide-binding</keyword>
<keyword id="KW-0346">Stress response</keyword>
<accession>B5QXM0</accession>
<dbReference type="EMBL" id="AM933172">
    <property type="protein sequence ID" value="CAR35455.1"/>
    <property type="molecule type" value="Genomic_DNA"/>
</dbReference>
<dbReference type="RefSeq" id="WP_001293360.1">
    <property type="nucleotide sequence ID" value="NC_011294.1"/>
</dbReference>
<dbReference type="SMR" id="B5QXM0"/>
<dbReference type="KEGG" id="set:SEN3881"/>
<dbReference type="HOGENOM" id="CLU_033123_0_0_6"/>
<dbReference type="Proteomes" id="UP000000613">
    <property type="component" value="Chromosome"/>
</dbReference>
<dbReference type="GO" id="GO:0009376">
    <property type="term" value="C:HslUV protease complex"/>
    <property type="evidence" value="ECO:0007669"/>
    <property type="project" value="UniProtKB-UniRule"/>
</dbReference>
<dbReference type="GO" id="GO:0005524">
    <property type="term" value="F:ATP binding"/>
    <property type="evidence" value="ECO:0007669"/>
    <property type="project" value="UniProtKB-UniRule"/>
</dbReference>
<dbReference type="GO" id="GO:0016887">
    <property type="term" value="F:ATP hydrolysis activity"/>
    <property type="evidence" value="ECO:0007669"/>
    <property type="project" value="InterPro"/>
</dbReference>
<dbReference type="GO" id="GO:0008233">
    <property type="term" value="F:peptidase activity"/>
    <property type="evidence" value="ECO:0007669"/>
    <property type="project" value="InterPro"/>
</dbReference>
<dbReference type="GO" id="GO:0036402">
    <property type="term" value="F:proteasome-activating activity"/>
    <property type="evidence" value="ECO:0007669"/>
    <property type="project" value="UniProtKB-UniRule"/>
</dbReference>
<dbReference type="GO" id="GO:0043335">
    <property type="term" value="P:protein unfolding"/>
    <property type="evidence" value="ECO:0007669"/>
    <property type="project" value="UniProtKB-UniRule"/>
</dbReference>
<dbReference type="GO" id="GO:0051603">
    <property type="term" value="P:proteolysis involved in protein catabolic process"/>
    <property type="evidence" value="ECO:0007669"/>
    <property type="project" value="TreeGrafter"/>
</dbReference>
<dbReference type="CDD" id="cd19498">
    <property type="entry name" value="RecA-like_HslU"/>
    <property type="match status" value="1"/>
</dbReference>
<dbReference type="FunFam" id="1.10.8.10:FF:000012">
    <property type="entry name" value="ATP-dependent protease ATPase subunit HslU"/>
    <property type="match status" value="1"/>
</dbReference>
<dbReference type="FunFam" id="1.10.8.10:FF:000028">
    <property type="entry name" value="ATP-dependent protease ATPase subunit HslU"/>
    <property type="match status" value="1"/>
</dbReference>
<dbReference type="FunFam" id="1.10.8.60:FF:000027">
    <property type="entry name" value="ATP-dependent protease ATPase subunit HslU"/>
    <property type="match status" value="1"/>
</dbReference>
<dbReference type="FunFam" id="3.40.50.300:FF:000213">
    <property type="entry name" value="ATP-dependent protease ATPase subunit HslU"/>
    <property type="match status" value="1"/>
</dbReference>
<dbReference type="FunFam" id="3.40.50.300:FF:000220">
    <property type="entry name" value="ATP-dependent protease ATPase subunit HslU"/>
    <property type="match status" value="1"/>
</dbReference>
<dbReference type="Gene3D" id="1.10.8.60">
    <property type="match status" value="1"/>
</dbReference>
<dbReference type="Gene3D" id="1.10.8.10">
    <property type="entry name" value="DNA helicase RuvA subunit, C-terminal domain"/>
    <property type="match status" value="2"/>
</dbReference>
<dbReference type="Gene3D" id="3.40.50.300">
    <property type="entry name" value="P-loop containing nucleotide triphosphate hydrolases"/>
    <property type="match status" value="1"/>
</dbReference>
<dbReference type="HAMAP" id="MF_00249">
    <property type="entry name" value="HslU"/>
    <property type="match status" value="1"/>
</dbReference>
<dbReference type="InterPro" id="IPR003593">
    <property type="entry name" value="AAA+_ATPase"/>
</dbReference>
<dbReference type="InterPro" id="IPR050052">
    <property type="entry name" value="ATP-dep_Clp_protease_ClpX"/>
</dbReference>
<dbReference type="InterPro" id="IPR003959">
    <property type="entry name" value="ATPase_AAA_core"/>
</dbReference>
<dbReference type="InterPro" id="IPR019489">
    <property type="entry name" value="Clp_ATPase_C"/>
</dbReference>
<dbReference type="InterPro" id="IPR004491">
    <property type="entry name" value="HslU"/>
</dbReference>
<dbReference type="InterPro" id="IPR027417">
    <property type="entry name" value="P-loop_NTPase"/>
</dbReference>
<dbReference type="NCBIfam" id="TIGR00390">
    <property type="entry name" value="hslU"/>
    <property type="match status" value="1"/>
</dbReference>
<dbReference type="NCBIfam" id="NF003544">
    <property type="entry name" value="PRK05201.1"/>
    <property type="match status" value="1"/>
</dbReference>
<dbReference type="PANTHER" id="PTHR48102">
    <property type="entry name" value="ATP-DEPENDENT CLP PROTEASE ATP-BINDING SUBUNIT CLPX-LIKE, MITOCHONDRIAL-RELATED"/>
    <property type="match status" value="1"/>
</dbReference>
<dbReference type="PANTHER" id="PTHR48102:SF3">
    <property type="entry name" value="ATP-DEPENDENT PROTEASE ATPASE SUBUNIT HSLU"/>
    <property type="match status" value="1"/>
</dbReference>
<dbReference type="Pfam" id="PF00004">
    <property type="entry name" value="AAA"/>
    <property type="match status" value="1"/>
</dbReference>
<dbReference type="Pfam" id="PF07724">
    <property type="entry name" value="AAA_2"/>
    <property type="match status" value="1"/>
</dbReference>
<dbReference type="SMART" id="SM00382">
    <property type="entry name" value="AAA"/>
    <property type="match status" value="1"/>
</dbReference>
<dbReference type="SMART" id="SM01086">
    <property type="entry name" value="ClpB_D2-small"/>
    <property type="match status" value="1"/>
</dbReference>
<dbReference type="SUPFAM" id="SSF52540">
    <property type="entry name" value="P-loop containing nucleoside triphosphate hydrolases"/>
    <property type="match status" value="1"/>
</dbReference>
<sequence>MSEMTPREIVSELNKHIIGQDNAKRSVAIALRNRWRRMQLDEELRHEVTPKNILMIGPTGVGKTEIARRLAKLANAPFIKVEATKFTEVGYVGKEVDSIIRDLTDAAVKMVRVQAIEKNRYRAEELAEERILDVLIPPAKNNWGQAEQQQEPSAARQTFRKKLREGQLDDKEIEINLAAAPMGVEIMAPPGMEEMTSQLQSMFQNLGGQKQKPRKLKIKDAMKLLVEEEAAKLVNPEELKQDAIDAVEQHGIVFIDEIDKICKRGETSGPDVSREGVQRDLLPLVEGCTVSTKHGMVKTDHILFIASGAFQVAKPSDLIPELQGRLPIRVELQALTTSDFERILTEPNASVTVQYKALMATEGVNIEFTDSGIKRIAEAAWQVNETTENIGARRLHTVLERLMEEISYNASDLHGQNITIDAEYVSKHLDALVADEDLSRFIL</sequence>
<reference key="1">
    <citation type="journal article" date="2008" name="Genome Res.">
        <title>Comparative genome analysis of Salmonella enteritidis PT4 and Salmonella gallinarum 287/91 provides insights into evolutionary and host adaptation pathways.</title>
        <authorList>
            <person name="Thomson N.R."/>
            <person name="Clayton D.J."/>
            <person name="Windhorst D."/>
            <person name="Vernikos G."/>
            <person name="Davidson S."/>
            <person name="Churcher C."/>
            <person name="Quail M.A."/>
            <person name="Stevens M."/>
            <person name="Jones M.A."/>
            <person name="Watson M."/>
            <person name="Barron A."/>
            <person name="Layton A."/>
            <person name="Pickard D."/>
            <person name="Kingsley R.A."/>
            <person name="Bignell A."/>
            <person name="Clark L."/>
            <person name="Harris B."/>
            <person name="Ormond D."/>
            <person name="Abdellah Z."/>
            <person name="Brooks K."/>
            <person name="Cherevach I."/>
            <person name="Chillingworth T."/>
            <person name="Woodward J."/>
            <person name="Norberczak H."/>
            <person name="Lord A."/>
            <person name="Arrowsmith C."/>
            <person name="Jagels K."/>
            <person name="Moule S."/>
            <person name="Mungall K."/>
            <person name="Saunders M."/>
            <person name="Whitehead S."/>
            <person name="Chabalgoity J.A."/>
            <person name="Maskell D."/>
            <person name="Humphreys T."/>
            <person name="Roberts M."/>
            <person name="Barrow P.A."/>
            <person name="Dougan G."/>
            <person name="Parkhill J."/>
        </authorList>
    </citation>
    <scope>NUCLEOTIDE SEQUENCE [LARGE SCALE GENOMIC DNA]</scope>
    <source>
        <strain>P125109</strain>
    </source>
</reference>